<accession>Q82UZ4</accession>
<keyword id="KW-1003">Cell membrane</keyword>
<keyword id="KW-0210">Decarboxylase</keyword>
<keyword id="KW-0444">Lipid biosynthesis</keyword>
<keyword id="KW-0443">Lipid metabolism</keyword>
<keyword id="KW-0456">Lyase</keyword>
<keyword id="KW-0472">Membrane</keyword>
<keyword id="KW-0594">Phospholipid biosynthesis</keyword>
<keyword id="KW-1208">Phospholipid metabolism</keyword>
<keyword id="KW-0670">Pyruvate</keyword>
<keyword id="KW-1185">Reference proteome</keyword>
<keyword id="KW-0865">Zymogen</keyword>
<sequence>MSTPYYPHPIIAREGWPFIAGAFAVALLVQFMAGWLWALPFWLIALFVLQFFRDPPRVVPALAGAVLAPADGRIVAVDKVQDPYLPREALKVSVFMNVFNVHSNRSPVDGEIRNRWYFPGNFLNASLPKASLENERNALWIRTDGGQDVTCVQIAGLIAKRIVCHVHPGEHLARGQRFGFIRFGSRVDVYLPLGTKVNVAIGDKVYATQTVLAEFH</sequence>
<protein>
    <recommendedName>
        <fullName evidence="1">Phosphatidylserine decarboxylase proenzyme</fullName>
        <ecNumber evidence="1">4.1.1.65</ecNumber>
    </recommendedName>
    <component>
        <recommendedName>
            <fullName evidence="1">Phosphatidylserine decarboxylase alpha chain</fullName>
        </recommendedName>
    </component>
    <component>
        <recommendedName>
            <fullName evidence="1">Phosphatidylserine decarboxylase beta chain</fullName>
        </recommendedName>
    </component>
</protein>
<organism>
    <name type="scientific">Nitrosomonas europaea (strain ATCC 19718 / CIP 103999 / KCTC 2705 / NBRC 14298)</name>
    <dbReference type="NCBI Taxonomy" id="228410"/>
    <lineage>
        <taxon>Bacteria</taxon>
        <taxon>Pseudomonadati</taxon>
        <taxon>Pseudomonadota</taxon>
        <taxon>Betaproteobacteria</taxon>
        <taxon>Nitrosomonadales</taxon>
        <taxon>Nitrosomonadaceae</taxon>
        <taxon>Nitrosomonas</taxon>
    </lineage>
</organism>
<gene>
    <name evidence="1" type="primary">psd</name>
    <name type="ordered locus">NE1322</name>
</gene>
<proteinExistence type="inferred from homology"/>
<feature type="chain" id="PRO_0000029789" description="Phosphatidylserine decarboxylase beta chain" evidence="1">
    <location>
        <begin position="1"/>
        <end position="184"/>
    </location>
</feature>
<feature type="chain" id="PRO_0000029790" description="Phosphatidylserine decarboxylase alpha chain" evidence="1">
    <location>
        <begin position="185"/>
        <end position="216"/>
    </location>
</feature>
<feature type="active site" description="Schiff-base intermediate with substrate; via pyruvic acid" evidence="1">
    <location>
        <position position="185"/>
    </location>
</feature>
<feature type="site" description="Cleavage (non-hydrolytic); by autocatalysis" evidence="1">
    <location>
        <begin position="184"/>
        <end position="185"/>
    </location>
</feature>
<feature type="modified residue" description="Pyruvic acid (Ser); by autocatalysis" evidence="1">
    <location>
        <position position="185"/>
    </location>
</feature>
<reference key="1">
    <citation type="journal article" date="2003" name="J. Bacteriol.">
        <title>Complete genome sequence of the ammonia-oxidizing bacterium and obligate chemolithoautotroph Nitrosomonas europaea.</title>
        <authorList>
            <person name="Chain P."/>
            <person name="Lamerdin J.E."/>
            <person name="Larimer F.W."/>
            <person name="Regala W."/>
            <person name="Lao V."/>
            <person name="Land M.L."/>
            <person name="Hauser L."/>
            <person name="Hooper A.B."/>
            <person name="Klotz M.G."/>
            <person name="Norton J."/>
            <person name="Sayavedra-Soto L.A."/>
            <person name="Arciero D.M."/>
            <person name="Hommes N.G."/>
            <person name="Whittaker M.M."/>
            <person name="Arp D.J."/>
        </authorList>
    </citation>
    <scope>NUCLEOTIDE SEQUENCE [LARGE SCALE GENOMIC DNA]</scope>
    <source>
        <strain>ATCC 19718 / CIP 103999 / KCTC 2705 / NBRC 14298</strain>
    </source>
</reference>
<comment type="function">
    <text evidence="1">Catalyzes the formation of phosphatidylethanolamine (PtdEtn) from phosphatidylserine (PtdSer).</text>
</comment>
<comment type="catalytic activity">
    <reaction evidence="1">
        <text>a 1,2-diacyl-sn-glycero-3-phospho-L-serine + H(+) = a 1,2-diacyl-sn-glycero-3-phosphoethanolamine + CO2</text>
        <dbReference type="Rhea" id="RHEA:20828"/>
        <dbReference type="ChEBI" id="CHEBI:15378"/>
        <dbReference type="ChEBI" id="CHEBI:16526"/>
        <dbReference type="ChEBI" id="CHEBI:57262"/>
        <dbReference type="ChEBI" id="CHEBI:64612"/>
        <dbReference type="EC" id="4.1.1.65"/>
    </reaction>
</comment>
<comment type="cofactor">
    <cofactor evidence="1">
        <name>pyruvate</name>
        <dbReference type="ChEBI" id="CHEBI:15361"/>
    </cofactor>
    <text evidence="1">Binds 1 pyruvoyl group covalently per subunit.</text>
</comment>
<comment type="pathway">
    <text evidence="1">Phospholipid metabolism; phosphatidylethanolamine biosynthesis; phosphatidylethanolamine from CDP-diacylglycerol: step 2/2.</text>
</comment>
<comment type="subunit">
    <text evidence="1">Heterodimer of a large membrane-associated beta subunit and a small pyruvoyl-containing alpha subunit.</text>
</comment>
<comment type="subcellular location">
    <subcellularLocation>
        <location evidence="1">Cell membrane</location>
        <topology evidence="1">Peripheral membrane protein</topology>
    </subcellularLocation>
</comment>
<comment type="PTM">
    <text evidence="1">Is synthesized initially as an inactive proenzyme. Formation of the active enzyme involves a self-maturation process in which the active site pyruvoyl group is generated from an internal serine residue via an autocatalytic post-translational modification. Two non-identical subunits are generated from the proenzyme in this reaction, and the pyruvate is formed at the N-terminus of the alpha chain, which is derived from the carboxyl end of the proenzyme. The post-translation cleavage follows an unusual pathway, termed non-hydrolytic serinolysis, in which the side chain hydroxyl group of the serine supplies its oxygen atom to form the C-terminus of the beta chain, while the remainder of the serine residue undergoes an oxidative deamination to produce ammonia and the pyruvoyl prosthetic group on the alpha chain.</text>
</comment>
<comment type="similarity">
    <text evidence="1">Belongs to the phosphatidylserine decarboxylase family. PSD-A subfamily.</text>
</comment>
<evidence type="ECO:0000255" key="1">
    <source>
        <dbReference type="HAMAP-Rule" id="MF_00664"/>
    </source>
</evidence>
<name>PSD_NITEU</name>
<dbReference type="EC" id="4.1.1.65" evidence="1"/>
<dbReference type="EMBL" id="AL954747">
    <property type="protein sequence ID" value="CAD85233.1"/>
    <property type="molecule type" value="Genomic_DNA"/>
</dbReference>
<dbReference type="RefSeq" id="WP_011111900.1">
    <property type="nucleotide sequence ID" value="NC_004757.1"/>
</dbReference>
<dbReference type="STRING" id="228410.NE1322"/>
<dbReference type="GeneID" id="87104498"/>
<dbReference type="KEGG" id="neu:NE1322"/>
<dbReference type="eggNOG" id="COG0688">
    <property type="taxonomic scope" value="Bacteria"/>
</dbReference>
<dbReference type="HOGENOM" id="CLU_072492_0_0_4"/>
<dbReference type="OrthoDB" id="9790893at2"/>
<dbReference type="PhylomeDB" id="Q82UZ4"/>
<dbReference type="UniPathway" id="UPA00558">
    <property type="reaction ID" value="UER00616"/>
</dbReference>
<dbReference type="Proteomes" id="UP000001416">
    <property type="component" value="Chromosome"/>
</dbReference>
<dbReference type="GO" id="GO:0005886">
    <property type="term" value="C:plasma membrane"/>
    <property type="evidence" value="ECO:0007669"/>
    <property type="project" value="UniProtKB-SubCell"/>
</dbReference>
<dbReference type="GO" id="GO:0004609">
    <property type="term" value="F:phosphatidylserine decarboxylase activity"/>
    <property type="evidence" value="ECO:0007669"/>
    <property type="project" value="UniProtKB-UniRule"/>
</dbReference>
<dbReference type="GO" id="GO:0006646">
    <property type="term" value="P:phosphatidylethanolamine biosynthetic process"/>
    <property type="evidence" value="ECO:0007669"/>
    <property type="project" value="UniProtKB-UniRule"/>
</dbReference>
<dbReference type="HAMAP" id="MF_00664">
    <property type="entry name" value="PS_decarb_PSD_A"/>
    <property type="match status" value="1"/>
</dbReference>
<dbReference type="InterPro" id="IPR003817">
    <property type="entry name" value="PS_Dcarbxylase"/>
</dbReference>
<dbReference type="InterPro" id="IPR033175">
    <property type="entry name" value="PSD-A"/>
</dbReference>
<dbReference type="NCBIfam" id="NF003678">
    <property type="entry name" value="PRK05305.1-2"/>
    <property type="match status" value="1"/>
</dbReference>
<dbReference type="NCBIfam" id="NF003680">
    <property type="entry name" value="PRK05305.1-5"/>
    <property type="match status" value="1"/>
</dbReference>
<dbReference type="PANTHER" id="PTHR35809">
    <property type="entry name" value="ARCHAETIDYLSERINE DECARBOXYLASE PROENZYME-RELATED"/>
    <property type="match status" value="1"/>
</dbReference>
<dbReference type="PANTHER" id="PTHR35809:SF1">
    <property type="entry name" value="ARCHAETIDYLSERINE DECARBOXYLASE PROENZYME-RELATED"/>
    <property type="match status" value="1"/>
</dbReference>
<dbReference type="Pfam" id="PF02666">
    <property type="entry name" value="PS_Dcarbxylase"/>
    <property type="match status" value="1"/>
</dbReference>